<accession>B0UJ99</accession>
<keyword id="KW-0963">Cytoplasm</keyword>
<keyword id="KW-0251">Elongation factor</keyword>
<keyword id="KW-0648">Protein biosynthesis</keyword>
<evidence type="ECO:0000255" key="1">
    <source>
        <dbReference type="HAMAP-Rule" id="MF_00141"/>
    </source>
</evidence>
<proteinExistence type="inferred from homology"/>
<reference key="1">
    <citation type="submission" date="2008-02" db="EMBL/GenBank/DDBJ databases">
        <title>Complete sequence of chromosome of Methylobacterium sp. 4-46.</title>
        <authorList>
            <consortium name="US DOE Joint Genome Institute"/>
            <person name="Copeland A."/>
            <person name="Lucas S."/>
            <person name="Lapidus A."/>
            <person name="Glavina del Rio T."/>
            <person name="Dalin E."/>
            <person name="Tice H."/>
            <person name="Bruce D."/>
            <person name="Goodwin L."/>
            <person name="Pitluck S."/>
            <person name="Chertkov O."/>
            <person name="Brettin T."/>
            <person name="Detter J.C."/>
            <person name="Han C."/>
            <person name="Kuske C.R."/>
            <person name="Schmutz J."/>
            <person name="Larimer F."/>
            <person name="Land M."/>
            <person name="Hauser L."/>
            <person name="Kyrpides N."/>
            <person name="Ivanova N."/>
            <person name="Marx C.J."/>
            <person name="Richardson P."/>
        </authorList>
    </citation>
    <scope>NUCLEOTIDE SEQUENCE [LARGE SCALE GENOMIC DNA]</scope>
    <source>
        <strain>4-46</strain>
    </source>
</reference>
<name>EFP_METS4</name>
<gene>
    <name evidence="1" type="primary">efp</name>
    <name type="ordered locus">M446_0379</name>
</gene>
<protein>
    <recommendedName>
        <fullName evidence="1">Elongation factor P</fullName>
        <shortName evidence="1">EF-P</shortName>
    </recommendedName>
</protein>
<sequence>MKVIASSLRKGNVVEKDGRLYVILSAENIHPGKGTPVTQLDMRRITDGVKVSERYRTTEQVERAFVEDREHTFLYKDGEGSHFMNPESYEQVAVPDDVIGDQAAYLQEGMAVMLSLHNGVPLAIELPQRVTLEIVETEPVTKGQTASSSYKPAVLSNGVRTLVPPHITTGTRVVIMTADGSYVERAKD</sequence>
<organism>
    <name type="scientific">Methylobacterium sp. (strain 4-46)</name>
    <dbReference type="NCBI Taxonomy" id="426117"/>
    <lineage>
        <taxon>Bacteria</taxon>
        <taxon>Pseudomonadati</taxon>
        <taxon>Pseudomonadota</taxon>
        <taxon>Alphaproteobacteria</taxon>
        <taxon>Hyphomicrobiales</taxon>
        <taxon>Methylobacteriaceae</taxon>
        <taxon>Methylobacterium</taxon>
    </lineage>
</organism>
<dbReference type="EMBL" id="CP000943">
    <property type="protein sequence ID" value="ACA14949.1"/>
    <property type="molecule type" value="Genomic_DNA"/>
</dbReference>
<dbReference type="RefSeq" id="WP_012330366.1">
    <property type="nucleotide sequence ID" value="NC_010511.1"/>
</dbReference>
<dbReference type="SMR" id="B0UJ99"/>
<dbReference type="STRING" id="426117.M446_0379"/>
<dbReference type="KEGG" id="met:M446_0379"/>
<dbReference type="eggNOG" id="COG0231">
    <property type="taxonomic scope" value="Bacteria"/>
</dbReference>
<dbReference type="HOGENOM" id="CLU_074944_1_1_5"/>
<dbReference type="UniPathway" id="UPA00345"/>
<dbReference type="GO" id="GO:0005737">
    <property type="term" value="C:cytoplasm"/>
    <property type="evidence" value="ECO:0007669"/>
    <property type="project" value="UniProtKB-SubCell"/>
</dbReference>
<dbReference type="GO" id="GO:0003746">
    <property type="term" value="F:translation elongation factor activity"/>
    <property type="evidence" value="ECO:0007669"/>
    <property type="project" value="UniProtKB-UniRule"/>
</dbReference>
<dbReference type="GO" id="GO:0043043">
    <property type="term" value="P:peptide biosynthetic process"/>
    <property type="evidence" value="ECO:0007669"/>
    <property type="project" value="InterPro"/>
</dbReference>
<dbReference type="CDD" id="cd04470">
    <property type="entry name" value="S1_EF-P_repeat_1"/>
    <property type="match status" value="1"/>
</dbReference>
<dbReference type="CDD" id="cd05794">
    <property type="entry name" value="S1_EF-P_repeat_2"/>
    <property type="match status" value="1"/>
</dbReference>
<dbReference type="FunFam" id="2.40.50.140:FF:000004">
    <property type="entry name" value="Elongation factor P"/>
    <property type="match status" value="1"/>
</dbReference>
<dbReference type="FunFam" id="2.40.50.140:FF:000009">
    <property type="entry name" value="Elongation factor P"/>
    <property type="match status" value="1"/>
</dbReference>
<dbReference type="Gene3D" id="2.30.30.30">
    <property type="match status" value="1"/>
</dbReference>
<dbReference type="Gene3D" id="2.40.50.140">
    <property type="entry name" value="Nucleic acid-binding proteins"/>
    <property type="match status" value="2"/>
</dbReference>
<dbReference type="HAMAP" id="MF_00141">
    <property type="entry name" value="EF_P"/>
    <property type="match status" value="1"/>
</dbReference>
<dbReference type="InterPro" id="IPR015365">
    <property type="entry name" value="Elong-fact-P_C"/>
</dbReference>
<dbReference type="InterPro" id="IPR012340">
    <property type="entry name" value="NA-bd_OB-fold"/>
</dbReference>
<dbReference type="InterPro" id="IPR014722">
    <property type="entry name" value="Rib_uL2_dom2"/>
</dbReference>
<dbReference type="InterPro" id="IPR020599">
    <property type="entry name" value="Transl_elong_fac_P/YeiP"/>
</dbReference>
<dbReference type="InterPro" id="IPR013185">
    <property type="entry name" value="Transl_elong_KOW-like"/>
</dbReference>
<dbReference type="InterPro" id="IPR001059">
    <property type="entry name" value="Transl_elong_P/YeiP_cen"/>
</dbReference>
<dbReference type="InterPro" id="IPR013852">
    <property type="entry name" value="Transl_elong_P/YeiP_CS"/>
</dbReference>
<dbReference type="InterPro" id="IPR011768">
    <property type="entry name" value="Transl_elongation_fac_P"/>
</dbReference>
<dbReference type="InterPro" id="IPR008991">
    <property type="entry name" value="Translation_prot_SH3-like_sf"/>
</dbReference>
<dbReference type="NCBIfam" id="TIGR00038">
    <property type="entry name" value="efp"/>
    <property type="match status" value="1"/>
</dbReference>
<dbReference type="NCBIfam" id="NF001810">
    <property type="entry name" value="PRK00529.1"/>
    <property type="match status" value="1"/>
</dbReference>
<dbReference type="PANTHER" id="PTHR30053">
    <property type="entry name" value="ELONGATION FACTOR P"/>
    <property type="match status" value="1"/>
</dbReference>
<dbReference type="PANTHER" id="PTHR30053:SF14">
    <property type="entry name" value="TRANSLATION ELONGATION FACTOR KOW-LIKE DOMAIN-CONTAINING PROTEIN"/>
    <property type="match status" value="1"/>
</dbReference>
<dbReference type="Pfam" id="PF01132">
    <property type="entry name" value="EFP"/>
    <property type="match status" value="1"/>
</dbReference>
<dbReference type="Pfam" id="PF08207">
    <property type="entry name" value="EFP_N"/>
    <property type="match status" value="1"/>
</dbReference>
<dbReference type="Pfam" id="PF09285">
    <property type="entry name" value="Elong-fact-P_C"/>
    <property type="match status" value="1"/>
</dbReference>
<dbReference type="PIRSF" id="PIRSF005901">
    <property type="entry name" value="EF-P"/>
    <property type="match status" value="1"/>
</dbReference>
<dbReference type="SMART" id="SM01185">
    <property type="entry name" value="EFP"/>
    <property type="match status" value="1"/>
</dbReference>
<dbReference type="SMART" id="SM00841">
    <property type="entry name" value="Elong-fact-P_C"/>
    <property type="match status" value="1"/>
</dbReference>
<dbReference type="SUPFAM" id="SSF50249">
    <property type="entry name" value="Nucleic acid-binding proteins"/>
    <property type="match status" value="2"/>
</dbReference>
<dbReference type="SUPFAM" id="SSF50104">
    <property type="entry name" value="Translation proteins SH3-like domain"/>
    <property type="match status" value="1"/>
</dbReference>
<dbReference type="PROSITE" id="PS01275">
    <property type="entry name" value="EFP"/>
    <property type="match status" value="1"/>
</dbReference>
<feature type="chain" id="PRO_1000096176" description="Elongation factor P">
    <location>
        <begin position="1"/>
        <end position="188"/>
    </location>
</feature>
<comment type="function">
    <text evidence="1">Involved in peptide bond synthesis. Stimulates efficient translation and peptide-bond synthesis on native or reconstituted 70S ribosomes in vitro. Probably functions indirectly by altering the affinity of the ribosome for aminoacyl-tRNA, thus increasing their reactivity as acceptors for peptidyl transferase.</text>
</comment>
<comment type="pathway">
    <text evidence="1">Protein biosynthesis; polypeptide chain elongation.</text>
</comment>
<comment type="subcellular location">
    <subcellularLocation>
        <location evidence="1">Cytoplasm</location>
    </subcellularLocation>
</comment>
<comment type="similarity">
    <text evidence="1">Belongs to the elongation factor P family.</text>
</comment>